<comment type="function">
    <text>Putative ion channel inhibitor.</text>
</comment>
<comment type="subcellular location">
    <subcellularLocation>
        <location evidence="1">Secreted</location>
    </subcellularLocation>
</comment>
<comment type="tissue specificity">
    <text>Expressed by the venom gland.</text>
</comment>
<comment type="domain">
    <text evidence="1">The presence of a 'disulfide through disulfide knot' structurally defines this protein as a knottin.</text>
</comment>
<comment type="similarity">
    <text>Belongs to the hainantoxin family. 17 subfamily.</text>
</comment>
<comment type="caution">
    <text evidence="3">While it is structurally defined as a knottin it lacks the conserved Cys residue in position 95.</text>
</comment>
<evidence type="ECO:0000250" key="1"/>
<evidence type="ECO:0000255" key="2"/>
<evidence type="ECO:0000305" key="3"/>
<reference key="1">
    <citation type="journal article" date="2010" name="J. Proteome Res.">
        <title>Molecular diversification of peptide toxins from the tarantula Haplopelma hainanum (Ornithoctonus hainana) venom based on transcriptomic, peptidomic, and genomic analyses.</title>
        <authorList>
            <person name="Tang X."/>
            <person name="Zhang Y."/>
            <person name="Hu W."/>
            <person name="Xu D."/>
            <person name="Tao H."/>
            <person name="Yang X."/>
            <person name="Li Y."/>
            <person name="Jiang L."/>
            <person name="Liang S."/>
        </authorList>
    </citation>
    <scope>NUCLEOTIDE SEQUENCE [LARGE SCALE MRNA]</scope>
    <source>
        <tissue>Venom gland</tissue>
    </source>
</reference>
<organism>
    <name type="scientific">Cyriopagopus hainanus</name>
    <name type="common">Chinese bird spider</name>
    <name type="synonym">Haplopelma hainanum</name>
    <dbReference type="NCBI Taxonomy" id="209901"/>
    <lineage>
        <taxon>Eukaryota</taxon>
        <taxon>Metazoa</taxon>
        <taxon>Ecdysozoa</taxon>
        <taxon>Arthropoda</taxon>
        <taxon>Chelicerata</taxon>
        <taxon>Arachnida</taxon>
        <taxon>Araneae</taxon>
        <taxon>Mygalomorphae</taxon>
        <taxon>Theraphosidae</taxon>
        <taxon>Haplopelma</taxon>
    </lineage>
</organism>
<proteinExistence type="evidence at transcript level"/>
<sequence>MTTVGVSLFRRSPEKITMKIATFLGLSFLLIASYVLICEAQHPGFQELLILEENMRDPENSKERSCAKPRENCNRMNILCCRGECVCPTFGDCFRYGD</sequence>
<dbReference type="EMBL" id="GU293003">
    <property type="protein sequence ID" value="ADB56819.1"/>
    <property type="molecule type" value="mRNA"/>
</dbReference>
<dbReference type="ArachnoServer" id="AS001722">
    <property type="toxin name" value="U12-theraphotoxin-Hhn1b"/>
</dbReference>
<dbReference type="GO" id="GO:0005576">
    <property type="term" value="C:extracellular region"/>
    <property type="evidence" value="ECO:0007669"/>
    <property type="project" value="UniProtKB-SubCell"/>
</dbReference>
<dbReference type="GO" id="GO:0099106">
    <property type="term" value="F:ion channel regulator activity"/>
    <property type="evidence" value="ECO:0007669"/>
    <property type="project" value="UniProtKB-KW"/>
</dbReference>
<dbReference type="GO" id="GO:0090729">
    <property type="term" value="F:toxin activity"/>
    <property type="evidence" value="ECO:0007669"/>
    <property type="project" value="UniProtKB-KW"/>
</dbReference>
<protein>
    <recommendedName>
        <fullName>Hainantoxin-XVII-2</fullName>
        <shortName>HNTX-XVII-2</shortName>
    </recommendedName>
</protein>
<name>H17B1_CYRHA</name>
<accession>D2Y2C6</accession>
<feature type="signal peptide" evidence="2">
    <location>
        <begin position="1"/>
        <end position="40"/>
    </location>
</feature>
<feature type="propeptide" id="PRO_0000401033" evidence="1">
    <location>
        <begin position="41"/>
        <end position="64"/>
    </location>
</feature>
<feature type="peptide" id="PRO_0000401034" description="Hainantoxin-XVII-2">
    <location>
        <begin position="65"/>
        <end position="98"/>
    </location>
</feature>
<feature type="disulfide bond" evidence="1">
    <location>
        <begin position="66"/>
        <end position="81"/>
    </location>
</feature>
<feature type="disulfide bond" evidence="1">
    <location>
        <begin position="73"/>
        <end position="85"/>
    </location>
</feature>
<keyword id="KW-1015">Disulfide bond</keyword>
<keyword id="KW-0872">Ion channel impairing toxin</keyword>
<keyword id="KW-0960">Knottin</keyword>
<keyword id="KW-0964">Secreted</keyword>
<keyword id="KW-0732">Signal</keyword>
<keyword id="KW-0800">Toxin</keyword>